<accession>A9VN54</accession>
<reference key="1">
    <citation type="journal article" date="2008" name="Chem. Biol. Interact.">
        <title>Extending the Bacillus cereus group genomics to putative food-borne pathogens of different toxicity.</title>
        <authorList>
            <person name="Lapidus A."/>
            <person name="Goltsman E."/>
            <person name="Auger S."/>
            <person name="Galleron N."/>
            <person name="Segurens B."/>
            <person name="Dossat C."/>
            <person name="Land M.L."/>
            <person name="Broussolle V."/>
            <person name="Brillard J."/>
            <person name="Guinebretiere M.-H."/>
            <person name="Sanchis V."/>
            <person name="Nguen-the C."/>
            <person name="Lereclus D."/>
            <person name="Richardson P."/>
            <person name="Wincker P."/>
            <person name="Weissenbach J."/>
            <person name="Ehrlich S.D."/>
            <person name="Sorokin A."/>
        </authorList>
    </citation>
    <scope>NUCLEOTIDE SEQUENCE [LARGE SCALE GENOMIC DNA]</scope>
    <source>
        <strain>KBAB4</strain>
    </source>
</reference>
<gene>
    <name evidence="1" type="primary">rsmA</name>
    <name evidence="1" type="synonym">ksgA</name>
    <name type="ordered locus">BcerKBAB4_0036</name>
</gene>
<proteinExistence type="inferred from homology"/>
<comment type="function">
    <text evidence="1">Specifically dimethylates two adjacent adenosines (A1518 and A1519) in the loop of a conserved hairpin near the 3'-end of 16S rRNA in the 30S particle. May play a critical role in biogenesis of 30S subunits.</text>
</comment>
<comment type="catalytic activity">
    <reaction evidence="1">
        <text>adenosine(1518)/adenosine(1519) in 16S rRNA + 4 S-adenosyl-L-methionine = N(6)-dimethyladenosine(1518)/N(6)-dimethyladenosine(1519) in 16S rRNA + 4 S-adenosyl-L-homocysteine + 4 H(+)</text>
        <dbReference type="Rhea" id="RHEA:19609"/>
        <dbReference type="Rhea" id="RHEA-COMP:10232"/>
        <dbReference type="Rhea" id="RHEA-COMP:10233"/>
        <dbReference type="ChEBI" id="CHEBI:15378"/>
        <dbReference type="ChEBI" id="CHEBI:57856"/>
        <dbReference type="ChEBI" id="CHEBI:59789"/>
        <dbReference type="ChEBI" id="CHEBI:74411"/>
        <dbReference type="ChEBI" id="CHEBI:74493"/>
        <dbReference type="EC" id="2.1.1.182"/>
    </reaction>
</comment>
<comment type="subcellular location">
    <subcellularLocation>
        <location evidence="1">Cytoplasm</location>
    </subcellularLocation>
</comment>
<comment type="similarity">
    <text evidence="1">Belongs to the class I-like SAM-binding methyltransferase superfamily. rRNA adenine N(6)-methyltransferase family. RsmA subfamily.</text>
</comment>
<sequence>MKDIATPNRTKDIVEKYGFSFKKSLGQNFLIDTNVLNRIVDHAEIGSESGAIEIGPGIGALTEQLAKRAKKVVAFEIDQRLLPILDETLAPYSNVTVINKDVLKADVHEVFSEQFEEGQDVMVVANLPYYITTPILFKLLEEKLPVRGFVVMMQKEVGDRLAAKPGTKEYGSLSIAIQYYTEVETVMTVPRTVFVPQPNVDSAIIRLLKRPKPVVEVTDETFFFEVVRASFAQRRKTLMNNLSNNLNGFPKDKELLDRILTEVGIDPKRRGETLSIEEFATLSNALILHKLS</sequence>
<dbReference type="EC" id="2.1.1.182" evidence="1"/>
<dbReference type="EMBL" id="CP000903">
    <property type="protein sequence ID" value="ABY41305.1"/>
    <property type="molecule type" value="Genomic_DNA"/>
</dbReference>
<dbReference type="RefSeq" id="WP_002091590.1">
    <property type="nucleotide sequence ID" value="NZ_CAKMRX030000131.1"/>
</dbReference>
<dbReference type="SMR" id="A9VN54"/>
<dbReference type="GeneID" id="66264907"/>
<dbReference type="KEGG" id="bwe:BcerKBAB4_0036"/>
<dbReference type="eggNOG" id="COG0030">
    <property type="taxonomic scope" value="Bacteria"/>
</dbReference>
<dbReference type="HOGENOM" id="CLU_041220_0_0_9"/>
<dbReference type="Proteomes" id="UP000002154">
    <property type="component" value="Chromosome"/>
</dbReference>
<dbReference type="GO" id="GO:0005829">
    <property type="term" value="C:cytosol"/>
    <property type="evidence" value="ECO:0007669"/>
    <property type="project" value="TreeGrafter"/>
</dbReference>
<dbReference type="GO" id="GO:0052908">
    <property type="term" value="F:16S rRNA (adenine(1518)-N(6)/adenine(1519)-N(6))-dimethyltransferase activity"/>
    <property type="evidence" value="ECO:0007669"/>
    <property type="project" value="UniProtKB-EC"/>
</dbReference>
<dbReference type="GO" id="GO:0003723">
    <property type="term" value="F:RNA binding"/>
    <property type="evidence" value="ECO:0007669"/>
    <property type="project" value="UniProtKB-KW"/>
</dbReference>
<dbReference type="CDD" id="cd02440">
    <property type="entry name" value="AdoMet_MTases"/>
    <property type="match status" value="1"/>
</dbReference>
<dbReference type="FunFam" id="1.10.8.100:FF:000002">
    <property type="entry name" value="Ribosomal RNA small subunit methyltransferase A"/>
    <property type="match status" value="1"/>
</dbReference>
<dbReference type="FunFam" id="3.40.50.150:FF:000023">
    <property type="entry name" value="Ribosomal RNA small subunit methyltransferase A"/>
    <property type="match status" value="1"/>
</dbReference>
<dbReference type="Gene3D" id="1.10.8.100">
    <property type="entry name" value="Ribosomal RNA adenine dimethylase-like, domain 2"/>
    <property type="match status" value="1"/>
</dbReference>
<dbReference type="Gene3D" id="3.40.50.150">
    <property type="entry name" value="Vaccinia Virus protein VP39"/>
    <property type="match status" value="1"/>
</dbReference>
<dbReference type="HAMAP" id="MF_00607">
    <property type="entry name" value="16SrRNA_methyltr_A"/>
    <property type="match status" value="1"/>
</dbReference>
<dbReference type="InterPro" id="IPR001737">
    <property type="entry name" value="KsgA/Erm"/>
</dbReference>
<dbReference type="InterPro" id="IPR023165">
    <property type="entry name" value="rRNA_Ade_diMease-like_C"/>
</dbReference>
<dbReference type="InterPro" id="IPR020596">
    <property type="entry name" value="rRNA_Ade_Mease_Trfase_CS"/>
</dbReference>
<dbReference type="InterPro" id="IPR020598">
    <property type="entry name" value="rRNA_Ade_methylase_Trfase_N"/>
</dbReference>
<dbReference type="InterPro" id="IPR011530">
    <property type="entry name" value="rRNA_adenine_dimethylase"/>
</dbReference>
<dbReference type="InterPro" id="IPR029063">
    <property type="entry name" value="SAM-dependent_MTases_sf"/>
</dbReference>
<dbReference type="NCBIfam" id="TIGR00755">
    <property type="entry name" value="ksgA"/>
    <property type="match status" value="1"/>
</dbReference>
<dbReference type="PANTHER" id="PTHR11727">
    <property type="entry name" value="DIMETHYLADENOSINE TRANSFERASE"/>
    <property type="match status" value="1"/>
</dbReference>
<dbReference type="PANTHER" id="PTHR11727:SF7">
    <property type="entry name" value="DIMETHYLADENOSINE TRANSFERASE-RELATED"/>
    <property type="match status" value="1"/>
</dbReference>
<dbReference type="Pfam" id="PF00398">
    <property type="entry name" value="RrnaAD"/>
    <property type="match status" value="1"/>
</dbReference>
<dbReference type="SMART" id="SM00650">
    <property type="entry name" value="rADc"/>
    <property type="match status" value="1"/>
</dbReference>
<dbReference type="SUPFAM" id="SSF53335">
    <property type="entry name" value="S-adenosyl-L-methionine-dependent methyltransferases"/>
    <property type="match status" value="1"/>
</dbReference>
<dbReference type="PROSITE" id="PS01131">
    <property type="entry name" value="RRNA_A_DIMETH"/>
    <property type="match status" value="1"/>
</dbReference>
<dbReference type="PROSITE" id="PS51689">
    <property type="entry name" value="SAM_RNA_A_N6_MT"/>
    <property type="match status" value="1"/>
</dbReference>
<protein>
    <recommendedName>
        <fullName evidence="1">Ribosomal RNA small subunit methyltransferase A</fullName>
        <ecNumber evidence="1">2.1.1.182</ecNumber>
    </recommendedName>
    <alternativeName>
        <fullName evidence="1">16S rRNA (adenine(1518)-N(6)/adenine(1519)-N(6))-dimethyltransferase</fullName>
    </alternativeName>
    <alternativeName>
        <fullName evidence="1">16S rRNA dimethyladenosine transferase</fullName>
    </alternativeName>
    <alternativeName>
        <fullName evidence="1">16S rRNA dimethylase</fullName>
    </alternativeName>
    <alternativeName>
        <fullName evidence="1">S-adenosylmethionine-6-N', N'-adenosyl(rRNA) dimethyltransferase</fullName>
    </alternativeName>
</protein>
<keyword id="KW-0963">Cytoplasm</keyword>
<keyword id="KW-0489">Methyltransferase</keyword>
<keyword id="KW-0694">RNA-binding</keyword>
<keyword id="KW-0698">rRNA processing</keyword>
<keyword id="KW-0949">S-adenosyl-L-methionine</keyword>
<keyword id="KW-0808">Transferase</keyword>
<organism>
    <name type="scientific">Bacillus mycoides (strain KBAB4)</name>
    <name type="common">Bacillus weihenstephanensis</name>
    <dbReference type="NCBI Taxonomy" id="315730"/>
    <lineage>
        <taxon>Bacteria</taxon>
        <taxon>Bacillati</taxon>
        <taxon>Bacillota</taxon>
        <taxon>Bacilli</taxon>
        <taxon>Bacillales</taxon>
        <taxon>Bacillaceae</taxon>
        <taxon>Bacillus</taxon>
        <taxon>Bacillus cereus group</taxon>
    </lineage>
</organism>
<name>RSMA_BACMK</name>
<evidence type="ECO:0000255" key="1">
    <source>
        <dbReference type="HAMAP-Rule" id="MF_00607"/>
    </source>
</evidence>
<feature type="chain" id="PRO_1000130245" description="Ribosomal RNA small subunit methyltransferase A">
    <location>
        <begin position="1"/>
        <end position="292"/>
    </location>
</feature>
<feature type="binding site" evidence="1">
    <location>
        <position position="28"/>
    </location>
    <ligand>
        <name>S-adenosyl-L-methionine</name>
        <dbReference type="ChEBI" id="CHEBI:59789"/>
    </ligand>
</feature>
<feature type="binding site" evidence="1">
    <location>
        <position position="30"/>
    </location>
    <ligand>
        <name>S-adenosyl-L-methionine</name>
        <dbReference type="ChEBI" id="CHEBI:59789"/>
    </ligand>
</feature>
<feature type="binding site" evidence="1">
    <location>
        <position position="55"/>
    </location>
    <ligand>
        <name>S-adenosyl-L-methionine</name>
        <dbReference type="ChEBI" id="CHEBI:59789"/>
    </ligand>
</feature>
<feature type="binding site" evidence="1">
    <location>
        <position position="76"/>
    </location>
    <ligand>
        <name>S-adenosyl-L-methionine</name>
        <dbReference type="ChEBI" id="CHEBI:59789"/>
    </ligand>
</feature>
<feature type="binding site" evidence="1">
    <location>
        <position position="101"/>
    </location>
    <ligand>
        <name>S-adenosyl-L-methionine</name>
        <dbReference type="ChEBI" id="CHEBI:59789"/>
    </ligand>
</feature>
<feature type="binding site" evidence="1">
    <location>
        <position position="126"/>
    </location>
    <ligand>
        <name>S-adenosyl-L-methionine</name>
        <dbReference type="ChEBI" id="CHEBI:59789"/>
    </ligand>
</feature>